<reference key="1">
    <citation type="submission" date="2009-07" db="EMBL/GenBank/DDBJ databases">
        <title>Complete sequence of Geobacter sp. M21.</title>
        <authorList>
            <consortium name="US DOE Joint Genome Institute"/>
            <person name="Lucas S."/>
            <person name="Copeland A."/>
            <person name="Lapidus A."/>
            <person name="Glavina del Rio T."/>
            <person name="Dalin E."/>
            <person name="Tice H."/>
            <person name="Bruce D."/>
            <person name="Goodwin L."/>
            <person name="Pitluck S."/>
            <person name="Saunders E."/>
            <person name="Brettin T."/>
            <person name="Detter J.C."/>
            <person name="Han C."/>
            <person name="Larimer F."/>
            <person name="Land M."/>
            <person name="Hauser L."/>
            <person name="Kyrpides N."/>
            <person name="Ovchinnikova G."/>
            <person name="Lovley D."/>
        </authorList>
    </citation>
    <scope>NUCLEOTIDE SEQUENCE [LARGE SCALE GENOMIC DNA]</scope>
    <source>
        <strain>M21</strain>
    </source>
</reference>
<keyword id="KW-0687">Ribonucleoprotein</keyword>
<keyword id="KW-0689">Ribosomal protein</keyword>
<keyword id="KW-0694">RNA-binding</keyword>
<keyword id="KW-0699">rRNA-binding</keyword>
<gene>
    <name evidence="1" type="primary">rpsR</name>
    <name type="ordered locus">GM21_1477</name>
</gene>
<proteinExistence type="inferred from homology"/>
<organism>
    <name type="scientific">Geobacter sp. (strain M21)</name>
    <dbReference type="NCBI Taxonomy" id="443144"/>
    <lineage>
        <taxon>Bacteria</taxon>
        <taxon>Pseudomonadati</taxon>
        <taxon>Thermodesulfobacteriota</taxon>
        <taxon>Desulfuromonadia</taxon>
        <taxon>Geobacterales</taxon>
        <taxon>Geobacteraceae</taxon>
        <taxon>Geobacter</taxon>
    </lineage>
</organism>
<protein>
    <recommendedName>
        <fullName evidence="1">Small ribosomal subunit protein bS18</fullName>
    </recommendedName>
    <alternativeName>
        <fullName evidence="3">30S ribosomal protein S18</fullName>
    </alternativeName>
</protein>
<name>RS18_GEOSM</name>
<sequence>MADERAPQRSTSGPRKKRPFQRRKVCRFCADKQVTIDYKDPRTLRYFVSERGKIIPRRISGNCSKHQREITEAIKRARNIALLPIAGSHATA</sequence>
<accession>C6E504</accession>
<feature type="chain" id="PRO_1000204728" description="Small ribosomal subunit protein bS18">
    <location>
        <begin position="1"/>
        <end position="92"/>
    </location>
</feature>
<feature type="region of interest" description="Disordered" evidence="2">
    <location>
        <begin position="1"/>
        <end position="22"/>
    </location>
</feature>
<evidence type="ECO:0000255" key="1">
    <source>
        <dbReference type="HAMAP-Rule" id="MF_00270"/>
    </source>
</evidence>
<evidence type="ECO:0000256" key="2">
    <source>
        <dbReference type="SAM" id="MobiDB-lite"/>
    </source>
</evidence>
<evidence type="ECO:0000305" key="3"/>
<comment type="function">
    <text evidence="1">Binds as a heterodimer with protein bS6 to the central domain of the 16S rRNA, where it helps stabilize the platform of the 30S subunit.</text>
</comment>
<comment type="subunit">
    <text evidence="1">Part of the 30S ribosomal subunit. Forms a tight heterodimer with protein bS6.</text>
</comment>
<comment type="similarity">
    <text evidence="1">Belongs to the bacterial ribosomal protein bS18 family.</text>
</comment>
<dbReference type="EMBL" id="CP001661">
    <property type="protein sequence ID" value="ACT17533.1"/>
    <property type="molecule type" value="Genomic_DNA"/>
</dbReference>
<dbReference type="SMR" id="C6E504"/>
<dbReference type="STRING" id="443144.GM21_1477"/>
<dbReference type="KEGG" id="gem:GM21_1477"/>
<dbReference type="eggNOG" id="COG0238">
    <property type="taxonomic scope" value="Bacteria"/>
</dbReference>
<dbReference type="HOGENOM" id="CLU_148710_2_2_7"/>
<dbReference type="OrthoDB" id="9812008at2"/>
<dbReference type="GO" id="GO:0022627">
    <property type="term" value="C:cytosolic small ribosomal subunit"/>
    <property type="evidence" value="ECO:0007669"/>
    <property type="project" value="TreeGrafter"/>
</dbReference>
<dbReference type="GO" id="GO:0070181">
    <property type="term" value="F:small ribosomal subunit rRNA binding"/>
    <property type="evidence" value="ECO:0007669"/>
    <property type="project" value="TreeGrafter"/>
</dbReference>
<dbReference type="GO" id="GO:0003735">
    <property type="term" value="F:structural constituent of ribosome"/>
    <property type="evidence" value="ECO:0007669"/>
    <property type="project" value="InterPro"/>
</dbReference>
<dbReference type="GO" id="GO:0006412">
    <property type="term" value="P:translation"/>
    <property type="evidence" value="ECO:0007669"/>
    <property type="project" value="UniProtKB-UniRule"/>
</dbReference>
<dbReference type="FunFam" id="4.10.640.10:FF:000004">
    <property type="entry name" value="30S ribosomal protein S18"/>
    <property type="match status" value="1"/>
</dbReference>
<dbReference type="Gene3D" id="4.10.640.10">
    <property type="entry name" value="Ribosomal protein S18"/>
    <property type="match status" value="1"/>
</dbReference>
<dbReference type="HAMAP" id="MF_00270">
    <property type="entry name" value="Ribosomal_bS18"/>
    <property type="match status" value="1"/>
</dbReference>
<dbReference type="InterPro" id="IPR001648">
    <property type="entry name" value="Ribosomal_bS18"/>
</dbReference>
<dbReference type="InterPro" id="IPR018275">
    <property type="entry name" value="Ribosomal_bS18_CS"/>
</dbReference>
<dbReference type="InterPro" id="IPR036870">
    <property type="entry name" value="Ribosomal_bS18_sf"/>
</dbReference>
<dbReference type="NCBIfam" id="TIGR00165">
    <property type="entry name" value="S18"/>
    <property type="match status" value="1"/>
</dbReference>
<dbReference type="PANTHER" id="PTHR13479">
    <property type="entry name" value="30S RIBOSOMAL PROTEIN S18"/>
    <property type="match status" value="1"/>
</dbReference>
<dbReference type="PANTHER" id="PTHR13479:SF40">
    <property type="entry name" value="SMALL RIBOSOMAL SUBUNIT PROTEIN BS18M"/>
    <property type="match status" value="1"/>
</dbReference>
<dbReference type="Pfam" id="PF01084">
    <property type="entry name" value="Ribosomal_S18"/>
    <property type="match status" value="1"/>
</dbReference>
<dbReference type="PRINTS" id="PR00974">
    <property type="entry name" value="RIBOSOMALS18"/>
</dbReference>
<dbReference type="SUPFAM" id="SSF46911">
    <property type="entry name" value="Ribosomal protein S18"/>
    <property type="match status" value="1"/>
</dbReference>
<dbReference type="PROSITE" id="PS00057">
    <property type="entry name" value="RIBOSOMAL_S18"/>
    <property type="match status" value="1"/>
</dbReference>